<evidence type="ECO:0000255" key="1">
    <source>
        <dbReference type="HAMAP-Rule" id="MF_01694"/>
    </source>
</evidence>
<evidence type="ECO:0000255" key="2">
    <source>
        <dbReference type="PROSITE-ProRule" id="PRU01266"/>
    </source>
</evidence>
<comment type="function">
    <text evidence="1">Catalyzes the conversion of dethiobiotin (DTB) to biotin by the insertion of a sulfur atom into dethiobiotin via a radical-based mechanism.</text>
</comment>
<comment type="catalytic activity">
    <reaction evidence="1">
        <text>(4R,5S)-dethiobiotin + (sulfur carrier)-SH + 2 reduced [2Fe-2S]-[ferredoxin] + 2 S-adenosyl-L-methionine = (sulfur carrier)-H + biotin + 2 5'-deoxyadenosine + 2 L-methionine + 2 oxidized [2Fe-2S]-[ferredoxin]</text>
        <dbReference type="Rhea" id="RHEA:22060"/>
        <dbReference type="Rhea" id="RHEA-COMP:10000"/>
        <dbReference type="Rhea" id="RHEA-COMP:10001"/>
        <dbReference type="Rhea" id="RHEA-COMP:14737"/>
        <dbReference type="Rhea" id="RHEA-COMP:14739"/>
        <dbReference type="ChEBI" id="CHEBI:17319"/>
        <dbReference type="ChEBI" id="CHEBI:29917"/>
        <dbReference type="ChEBI" id="CHEBI:33737"/>
        <dbReference type="ChEBI" id="CHEBI:33738"/>
        <dbReference type="ChEBI" id="CHEBI:57586"/>
        <dbReference type="ChEBI" id="CHEBI:57844"/>
        <dbReference type="ChEBI" id="CHEBI:59789"/>
        <dbReference type="ChEBI" id="CHEBI:64428"/>
        <dbReference type="ChEBI" id="CHEBI:149473"/>
        <dbReference type="EC" id="2.8.1.6"/>
    </reaction>
</comment>
<comment type="cofactor">
    <cofactor evidence="1">
        <name>[4Fe-4S] cluster</name>
        <dbReference type="ChEBI" id="CHEBI:49883"/>
    </cofactor>
    <text evidence="1">Binds 1 [4Fe-4S] cluster. The cluster is coordinated with 3 cysteines and an exchangeable S-adenosyl-L-methionine.</text>
</comment>
<comment type="cofactor">
    <cofactor evidence="1">
        <name>[2Fe-2S] cluster</name>
        <dbReference type="ChEBI" id="CHEBI:190135"/>
    </cofactor>
    <text evidence="1">Binds 1 [2Fe-2S] cluster. The cluster is coordinated with 3 cysteines and 1 arginine.</text>
</comment>
<comment type="pathway">
    <text evidence="1">Cofactor biosynthesis; biotin biosynthesis; biotin from 7,8-diaminononanoate: step 2/2.</text>
</comment>
<comment type="subunit">
    <text evidence="1">Homodimer.</text>
</comment>
<comment type="similarity">
    <text evidence="1">Belongs to the radical SAM superfamily. Biotin synthase family.</text>
</comment>
<feature type="chain" id="PRO_0000381512" description="Biotin synthase">
    <location>
        <begin position="1"/>
        <end position="336"/>
    </location>
</feature>
<feature type="domain" description="Radical SAM core" evidence="2">
    <location>
        <begin position="55"/>
        <end position="282"/>
    </location>
</feature>
<feature type="binding site" evidence="1">
    <location>
        <position position="70"/>
    </location>
    <ligand>
        <name>[4Fe-4S] cluster</name>
        <dbReference type="ChEBI" id="CHEBI:49883"/>
        <note>4Fe-4S-S-AdoMet</note>
    </ligand>
</feature>
<feature type="binding site" evidence="1">
    <location>
        <position position="74"/>
    </location>
    <ligand>
        <name>[4Fe-4S] cluster</name>
        <dbReference type="ChEBI" id="CHEBI:49883"/>
        <note>4Fe-4S-S-AdoMet</note>
    </ligand>
</feature>
<feature type="binding site" evidence="1">
    <location>
        <position position="77"/>
    </location>
    <ligand>
        <name>[4Fe-4S] cluster</name>
        <dbReference type="ChEBI" id="CHEBI:49883"/>
        <note>4Fe-4S-S-AdoMet</note>
    </ligand>
</feature>
<feature type="binding site" evidence="1">
    <location>
        <position position="114"/>
    </location>
    <ligand>
        <name>[2Fe-2S] cluster</name>
        <dbReference type="ChEBI" id="CHEBI:190135"/>
    </ligand>
</feature>
<feature type="binding site" evidence="1">
    <location>
        <position position="145"/>
    </location>
    <ligand>
        <name>[2Fe-2S] cluster</name>
        <dbReference type="ChEBI" id="CHEBI:190135"/>
    </ligand>
</feature>
<feature type="binding site" evidence="1">
    <location>
        <position position="205"/>
    </location>
    <ligand>
        <name>[2Fe-2S] cluster</name>
        <dbReference type="ChEBI" id="CHEBI:190135"/>
    </ligand>
</feature>
<feature type="binding site" evidence="1">
    <location>
        <position position="277"/>
    </location>
    <ligand>
        <name>[2Fe-2S] cluster</name>
        <dbReference type="ChEBI" id="CHEBI:190135"/>
    </ligand>
</feature>
<keyword id="KW-0001">2Fe-2S</keyword>
<keyword id="KW-0004">4Fe-4S</keyword>
<keyword id="KW-0093">Biotin biosynthesis</keyword>
<keyword id="KW-0408">Iron</keyword>
<keyword id="KW-0411">Iron-sulfur</keyword>
<keyword id="KW-0479">Metal-binding</keyword>
<keyword id="KW-1185">Reference proteome</keyword>
<keyword id="KW-0949">S-adenosyl-L-methionine</keyword>
<keyword id="KW-0808">Transferase</keyword>
<dbReference type="EC" id="2.8.1.6" evidence="1"/>
<dbReference type="EMBL" id="CP000759">
    <property type="protein sequence ID" value="ABS15532.1"/>
    <property type="molecule type" value="Genomic_DNA"/>
</dbReference>
<dbReference type="SMR" id="A6X2S8"/>
<dbReference type="STRING" id="439375.Oant_2823"/>
<dbReference type="KEGG" id="oan:Oant_2823"/>
<dbReference type="eggNOG" id="COG0502">
    <property type="taxonomic scope" value="Bacteria"/>
</dbReference>
<dbReference type="HOGENOM" id="CLU_033172_1_2_5"/>
<dbReference type="PhylomeDB" id="A6X2S8"/>
<dbReference type="UniPathway" id="UPA00078">
    <property type="reaction ID" value="UER00162"/>
</dbReference>
<dbReference type="Proteomes" id="UP000002301">
    <property type="component" value="Chromosome 2"/>
</dbReference>
<dbReference type="GO" id="GO:0051537">
    <property type="term" value="F:2 iron, 2 sulfur cluster binding"/>
    <property type="evidence" value="ECO:0007669"/>
    <property type="project" value="UniProtKB-KW"/>
</dbReference>
<dbReference type="GO" id="GO:0051539">
    <property type="term" value="F:4 iron, 4 sulfur cluster binding"/>
    <property type="evidence" value="ECO:0007669"/>
    <property type="project" value="UniProtKB-KW"/>
</dbReference>
<dbReference type="GO" id="GO:0004076">
    <property type="term" value="F:biotin synthase activity"/>
    <property type="evidence" value="ECO:0007669"/>
    <property type="project" value="UniProtKB-UniRule"/>
</dbReference>
<dbReference type="GO" id="GO:0005506">
    <property type="term" value="F:iron ion binding"/>
    <property type="evidence" value="ECO:0007669"/>
    <property type="project" value="UniProtKB-UniRule"/>
</dbReference>
<dbReference type="GO" id="GO:0009102">
    <property type="term" value="P:biotin biosynthetic process"/>
    <property type="evidence" value="ECO:0007669"/>
    <property type="project" value="UniProtKB-UniRule"/>
</dbReference>
<dbReference type="CDD" id="cd01335">
    <property type="entry name" value="Radical_SAM"/>
    <property type="match status" value="1"/>
</dbReference>
<dbReference type="Gene3D" id="3.20.20.70">
    <property type="entry name" value="Aldolase class I"/>
    <property type="match status" value="1"/>
</dbReference>
<dbReference type="HAMAP" id="MF_01694">
    <property type="entry name" value="BioB"/>
    <property type="match status" value="1"/>
</dbReference>
<dbReference type="InterPro" id="IPR013785">
    <property type="entry name" value="Aldolase_TIM"/>
</dbReference>
<dbReference type="InterPro" id="IPR010722">
    <property type="entry name" value="BATS_dom"/>
</dbReference>
<dbReference type="InterPro" id="IPR002684">
    <property type="entry name" value="Biotin_synth/BioAB"/>
</dbReference>
<dbReference type="InterPro" id="IPR024177">
    <property type="entry name" value="Biotin_synthase"/>
</dbReference>
<dbReference type="InterPro" id="IPR006638">
    <property type="entry name" value="Elp3/MiaA/NifB-like_rSAM"/>
</dbReference>
<dbReference type="InterPro" id="IPR007197">
    <property type="entry name" value="rSAM"/>
</dbReference>
<dbReference type="NCBIfam" id="TIGR00433">
    <property type="entry name" value="bioB"/>
    <property type="match status" value="1"/>
</dbReference>
<dbReference type="PANTHER" id="PTHR22976">
    <property type="entry name" value="BIOTIN SYNTHASE"/>
    <property type="match status" value="1"/>
</dbReference>
<dbReference type="PANTHER" id="PTHR22976:SF2">
    <property type="entry name" value="BIOTIN SYNTHASE, MITOCHONDRIAL"/>
    <property type="match status" value="1"/>
</dbReference>
<dbReference type="Pfam" id="PF06968">
    <property type="entry name" value="BATS"/>
    <property type="match status" value="1"/>
</dbReference>
<dbReference type="Pfam" id="PF04055">
    <property type="entry name" value="Radical_SAM"/>
    <property type="match status" value="1"/>
</dbReference>
<dbReference type="PIRSF" id="PIRSF001619">
    <property type="entry name" value="Biotin_synth"/>
    <property type="match status" value="1"/>
</dbReference>
<dbReference type="SFLD" id="SFLDF00272">
    <property type="entry name" value="biotin_synthase"/>
    <property type="match status" value="1"/>
</dbReference>
<dbReference type="SFLD" id="SFLDG01278">
    <property type="entry name" value="biotin_synthase_like"/>
    <property type="match status" value="1"/>
</dbReference>
<dbReference type="SMART" id="SM00876">
    <property type="entry name" value="BATS"/>
    <property type="match status" value="1"/>
</dbReference>
<dbReference type="SMART" id="SM00729">
    <property type="entry name" value="Elp3"/>
    <property type="match status" value="1"/>
</dbReference>
<dbReference type="SUPFAM" id="SSF102114">
    <property type="entry name" value="Radical SAM enzymes"/>
    <property type="match status" value="1"/>
</dbReference>
<dbReference type="PROSITE" id="PS51918">
    <property type="entry name" value="RADICAL_SAM"/>
    <property type="match status" value="1"/>
</dbReference>
<name>BIOB_BRUA4</name>
<gene>
    <name evidence="1" type="primary">bioB</name>
    <name type="ordered locus">Oant_2823</name>
</gene>
<protein>
    <recommendedName>
        <fullName evidence="1">Biotin synthase</fullName>
        <ecNumber evidence="1">2.8.1.6</ecNumber>
    </recommendedName>
</protein>
<reference key="1">
    <citation type="journal article" date="2011" name="J. Bacteriol.">
        <title>Genome of Ochrobactrum anthropi ATCC 49188 T, a versatile opportunistic pathogen and symbiont of several eukaryotic hosts.</title>
        <authorList>
            <person name="Chain P.S."/>
            <person name="Lang D.M."/>
            <person name="Comerci D.J."/>
            <person name="Malfatti S.A."/>
            <person name="Vergez L.M."/>
            <person name="Shin M."/>
            <person name="Ugalde R.A."/>
            <person name="Garcia E."/>
            <person name="Tolmasky M.E."/>
        </authorList>
    </citation>
    <scope>NUCLEOTIDE SEQUENCE [LARGE SCALE GENOMIC DNA]</scope>
    <source>
        <strain>ATCC 49188 / DSM 6882 / CCUG 24695 / JCM 21032 / LMG 3331 / NBRC 15819 / NCTC 12168 / Alc 37</strain>
    </source>
</reference>
<proteinExistence type="inferred from homology"/>
<sequence>MLNMVQSNPKGVEKTASKSEQDAWTLASARLLYDLPFNDLLFEAQNVHRANFDPNRVQLSKLLNIKTGGCPEDCGYCSQSAHHASGLKASKLMSLDTVLEEAQKAKDSGATRYCMGAAWRSPKPRDEPAIAEMVKQVKALGLETCMTLGMLSPDQAQTFAEAGLDYYNHNIDTSERFYPQVITTRSFDDRLETLAHVREAGIKVCSGGILGLGETEDDRIDMLVTLANLPTPPESVPINMLIPMPGSRLEKASPVDPIAFVRIIALARLMMPQSHVRLTAGRNSMSDEMQALCFFAGANSIFIGDTLLTAANPGEDRDTSLMRRLGLTADTLDNHA</sequence>
<organism>
    <name type="scientific">Brucella anthropi (strain ATCC 49188 / DSM 6882 / CCUG 24695 / JCM 21032 / LMG 3331 / NBRC 15819 / NCTC 12168 / Alc 37)</name>
    <name type="common">Ochrobactrum anthropi</name>
    <dbReference type="NCBI Taxonomy" id="439375"/>
    <lineage>
        <taxon>Bacteria</taxon>
        <taxon>Pseudomonadati</taxon>
        <taxon>Pseudomonadota</taxon>
        <taxon>Alphaproteobacteria</taxon>
        <taxon>Hyphomicrobiales</taxon>
        <taxon>Brucellaceae</taxon>
        <taxon>Brucella/Ochrobactrum group</taxon>
        <taxon>Brucella</taxon>
    </lineage>
</organism>
<accession>A6X2S8</accession>